<evidence type="ECO:0000256" key="1">
    <source>
        <dbReference type="SAM" id="MobiDB-lite"/>
    </source>
</evidence>
<evidence type="ECO:0000269" key="2">
    <source>
    </source>
</evidence>
<evidence type="ECO:0000269" key="3">
    <source>
    </source>
</evidence>
<evidence type="ECO:0000303" key="4">
    <source>
    </source>
</evidence>
<evidence type="ECO:0000303" key="5">
    <source>
    </source>
</evidence>
<evidence type="ECO:0000305" key="6"/>
<evidence type="ECO:0000305" key="7">
    <source>
    </source>
</evidence>
<sequence>MKNRILRPALLCVAALFATTAQADAGHDHGSAHAGAHAHDADTPYGRPGDAAKAQRTVRVVMSDTMRFDPATITVRRGETVRFVAANGGRIEHEFVLGTTASLKAHAQEMRAMPDMQHADPGAVRVAAGASGEIVWQFTKAGSFEFACLIPGHFEAGMVGKVVVR</sequence>
<comment type="function">
    <text evidence="2 3">Involved in copper tolerance (PubMed:26396241, PubMed:34791351). Required for copper resistance under both aerobic and anaerobic photosynthetic growth conditions (PubMed:26396241). Binds copper (PubMed:26396241, PubMed:34791351). Could be an important defense against copper in the periplasm and may protect not only c type cytochromes but also other proteins with cysteine residues from copper ions that may catalyze nonnative disulfide bond formation (PubMed:26396241).</text>
</comment>
<comment type="subunit">
    <text evidence="3">Monomer.</text>
</comment>
<comment type="subcellular location">
    <subcellularLocation>
        <location evidence="2 3">Periplasm</location>
    </subcellularLocation>
</comment>
<comment type="induction">
    <text evidence="2 3">Induced by increasing copper concentrations under microaerobic respiration and anaerobic photosynthetic conditions (PubMed:26396241, PubMed:34791351). Not detected under aerobiosis even at high copper concentrations (PubMed:34791351). Full induction requires the presence of the transcriptional regulator CopR (PubMed:26396241).</text>
</comment>
<comment type="domain">
    <text evidence="3">Is a green cupredoxin able to bind a maximum of three Cu(2+) ions: a green copper site (CuT1.5), a type 2 copper binding site (T2) located in the N-terminal region, and a third site with a yet unidentified location.</text>
</comment>
<comment type="disruption phenotype">
    <text evidence="2">When exposed to copper, the deletion mutant shows reduced growth under both aerobic and anaerobic photosynthetic conditions (PubMed:26396241). Mutant is extremely sensitive to copper under anaerobic photosynthetic conditions (PubMed:26396241). Mutants lacking this gene are more susceptible to copper than the Cu(+) ATPase copA mutant under microaerobic and anaerobic photosynthetic conditions (PubMed:26396241). Periplasmic copper accumulation in the deletion mutant affects periplasmic and membrane c-type cytochromes (PubMed:26396241).</text>
</comment>
<comment type="similarity">
    <text evidence="6">Belongs to the CopI family.</text>
</comment>
<accession>W8FLH9</accession>
<dbReference type="EMBL" id="KF938602">
    <property type="protein sequence ID" value="AHK06047.1"/>
    <property type="molecule type" value="Genomic_DNA"/>
</dbReference>
<dbReference type="SMR" id="W8FLH9"/>
<dbReference type="GO" id="GO:0042597">
    <property type="term" value="C:periplasmic space"/>
    <property type="evidence" value="ECO:0007669"/>
    <property type="project" value="UniProtKB-SubCell"/>
</dbReference>
<dbReference type="GO" id="GO:0005507">
    <property type="term" value="F:copper ion binding"/>
    <property type="evidence" value="ECO:0007669"/>
    <property type="project" value="InterPro"/>
</dbReference>
<dbReference type="GO" id="GO:0009055">
    <property type="term" value="F:electron transfer activity"/>
    <property type="evidence" value="ECO:0007669"/>
    <property type="project" value="InterPro"/>
</dbReference>
<dbReference type="CDD" id="cd04211">
    <property type="entry name" value="Cupredoxin_like_2"/>
    <property type="match status" value="1"/>
</dbReference>
<dbReference type="Gene3D" id="2.60.40.420">
    <property type="entry name" value="Cupredoxins - blue copper proteins"/>
    <property type="match status" value="1"/>
</dbReference>
<dbReference type="InterPro" id="IPR000923">
    <property type="entry name" value="BlueCu_1"/>
</dbReference>
<dbReference type="InterPro" id="IPR050845">
    <property type="entry name" value="Cu-binding_ET"/>
</dbReference>
<dbReference type="InterPro" id="IPR033138">
    <property type="entry name" value="Cu_oxidase_CS"/>
</dbReference>
<dbReference type="InterPro" id="IPR008972">
    <property type="entry name" value="Cupredoxin"/>
</dbReference>
<dbReference type="PANTHER" id="PTHR38439">
    <property type="entry name" value="AURACYANIN-B"/>
    <property type="match status" value="1"/>
</dbReference>
<dbReference type="PANTHER" id="PTHR38439:SF3">
    <property type="entry name" value="COPPER-RESISTANT CUPROPROTEIN COPI"/>
    <property type="match status" value="1"/>
</dbReference>
<dbReference type="Pfam" id="PF00127">
    <property type="entry name" value="Copper-bind"/>
    <property type="match status" value="1"/>
</dbReference>
<dbReference type="SUPFAM" id="SSF49503">
    <property type="entry name" value="Cupredoxins"/>
    <property type="match status" value="1"/>
</dbReference>
<dbReference type="PROSITE" id="PS00079">
    <property type="entry name" value="MULTICOPPER_OXIDASE1"/>
    <property type="match status" value="1"/>
</dbReference>
<proteinExistence type="evidence at protein level"/>
<feature type="signal peptide" evidence="2">
    <location>
        <begin position="1"/>
        <end position="23"/>
    </location>
</feature>
<feature type="chain" id="PRO_5004908644" description="Copper-resistant cuproprotein CopI">
    <location>
        <begin position="24"/>
        <end position="165"/>
    </location>
</feature>
<feature type="region of interest" description="Disordered" evidence="1">
    <location>
        <begin position="25"/>
        <end position="50"/>
    </location>
</feature>
<feature type="compositionally biased region" description="Basic and acidic residues" evidence="1">
    <location>
        <begin position="25"/>
        <end position="42"/>
    </location>
</feature>
<feature type="binding site" evidence="7">
    <location>
        <position position="93"/>
    </location>
    <ligand>
        <name>Cu(2+)</name>
        <dbReference type="ChEBI" id="CHEBI:29036"/>
        <note>CuT1 site</note>
    </ligand>
</feature>
<feature type="binding site" evidence="7">
    <location>
        <position position="148"/>
    </location>
    <ligand>
        <name>Cu(2+)</name>
        <dbReference type="ChEBI" id="CHEBI:29036"/>
        <note>CuT1 site</note>
    </ligand>
</feature>
<feature type="binding site" evidence="7">
    <location>
        <position position="153"/>
    </location>
    <ligand>
        <name>Cu(2+)</name>
        <dbReference type="ChEBI" id="CHEBI:29036"/>
        <note>CuT1 site</note>
    </ligand>
</feature>
<feature type="binding site" evidence="7">
    <location>
        <position position="158"/>
    </location>
    <ligand>
        <name>Cu(2+)</name>
        <dbReference type="ChEBI" id="CHEBI:29036"/>
        <note>CuT1 site</note>
    </ligand>
</feature>
<feature type="mutagenesis site" description="Does not affect activity; when associated with A-29; S-33; S-37 and S-39." evidence="3">
    <original>H</original>
    <variation>S</variation>
    <location>
        <position position="27"/>
    </location>
</feature>
<feature type="mutagenesis site" description="Does not affect activity; when associated with S-27; S-33; S-37 and S-39." evidence="3">
    <original>H</original>
    <variation>A</variation>
    <location>
        <position position="29"/>
    </location>
</feature>
<feature type="mutagenesis site" description="Does not affect activity; when associated with S-27; A-29; S-37 and S-39." evidence="3">
    <original>H</original>
    <variation>S</variation>
    <location>
        <position position="33"/>
    </location>
</feature>
<feature type="mutagenesis site" description="Does not affect activity; when associated with S-27; A-29; S-33 and S-39." evidence="3">
    <original>H</original>
    <variation>S</variation>
    <location>
        <position position="37"/>
    </location>
</feature>
<feature type="mutagenesis site" description="Does not affect activity; when associated with S-27; A-29; S-33 and S-37." evidence="3">
    <original>H</original>
    <variation>S</variation>
    <location>
        <position position="39"/>
    </location>
</feature>
<feature type="mutagenesis site" description="Loss of activity, cannot restore copper tolerance in a deletion mutant; when associated with S-118." evidence="3">
    <original>H</original>
    <variation>S</variation>
    <location>
        <position position="106"/>
    </location>
</feature>
<feature type="mutagenesis site" description="Loss of activity, cannot restore copper tolerance in a deletion mutant; when associated with S-113 and S-116." evidence="3">
    <original>M</original>
    <variation>S</variation>
    <location>
        <position position="110"/>
    </location>
</feature>
<feature type="mutagenesis site" description="Loss of activity, cannot restore copper tolerance in a deletion mutant; when associated with S-110 and S-116." evidence="3">
    <original>M</original>
    <variation>S</variation>
    <location>
        <position position="113"/>
    </location>
</feature>
<feature type="mutagenesis site" description="Loss of activity, cannot restore copper tolerance in a deletion mutant; when associated with S-110 and S-113." evidence="3">
    <original>M</original>
    <variation>S</variation>
    <location>
        <position position="116"/>
    </location>
</feature>
<feature type="mutagenesis site" description="Loss of activity, cannot restore copper tolerance in a deletion mutant; when associated with S-106." evidence="3">
    <original>H</original>
    <variation>S</variation>
    <location>
        <position position="118"/>
    </location>
</feature>
<feature type="mutagenesis site" description="Loss of activity, cannot restore copper tolerance in a deletion mutant." evidence="3">
    <original>C</original>
    <variation>S</variation>
    <location>
        <position position="148"/>
    </location>
</feature>
<protein>
    <recommendedName>
        <fullName evidence="5">Copper-resistant cuproprotein CopI</fullName>
    </recommendedName>
</protein>
<name>COPI_RUBGE</name>
<organism>
    <name type="scientific">Rubrivivax gelatinosus</name>
    <name type="common">Rhodocyclus gelatinosus</name>
    <name type="synonym">Rhodopseudomonas gelatinosa</name>
    <dbReference type="NCBI Taxonomy" id="28068"/>
    <lineage>
        <taxon>Bacteria</taxon>
        <taxon>Pseudomonadati</taxon>
        <taxon>Pseudomonadota</taxon>
        <taxon>Betaproteobacteria</taxon>
        <taxon>Burkholderiales</taxon>
        <taxon>Sphaerotilaceae</taxon>
        <taxon>Rubrivivax</taxon>
    </lineage>
</organism>
<keyword id="KW-0186">Copper</keyword>
<keyword id="KW-0479">Metal-binding</keyword>
<keyword id="KW-0574">Periplasm</keyword>
<keyword id="KW-0732">Signal</keyword>
<reference key="1">
    <citation type="journal article" date="2015" name="MBio">
        <title>c-type cytochrome assembly is a key target of copper toxicity within the bacterial periplasm.</title>
        <authorList>
            <person name="Durand A."/>
            <person name="Azzouzi A."/>
            <person name="Bourbon M.L."/>
            <person name="Steunou A.S."/>
            <person name="Liotenberg S."/>
            <person name="Maeshima A."/>
            <person name="Astier C."/>
            <person name="Argentini M."/>
            <person name="Saito S."/>
            <person name="Ouchane S."/>
        </authorList>
    </citation>
    <scope>NUCLEOTIDE SEQUENCE [GENOMIC DNA]</scope>
    <scope>IDENTIFICATION BY MASS SPECTROMETRY</scope>
    <scope>FUNCTION</scope>
    <scope>SUBCELLULAR LOCATION</scope>
    <scope>INDUCTION</scope>
    <scope>DISRUPTION PHENOTYPE</scope>
    <source>
        <strain>S1</strain>
    </source>
</reference>
<reference key="2">
    <citation type="journal article" date="2021" name="Metallomics">
        <title>A periplasmic cupredoxin with a green CuT1.5 center is involved in bacterial copper tolerance.</title>
        <authorList>
            <person name="Durand A."/>
            <person name="Fouesnard M."/>
            <person name="Bourbon M.L."/>
            <person name="Steunou A.S."/>
            <person name="Lojou E."/>
            <person name="Dorlet P."/>
            <person name="Ouchane S."/>
        </authorList>
    </citation>
    <scope>FUNCTION</scope>
    <scope>SUBUNIT</scope>
    <scope>SUBCELLULAR LOCATION</scope>
    <scope>INDUCTION</scope>
    <scope>SPECTROSCOPIC ANALYSIS</scope>
    <scope>DOMAIN</scope>
    <scope>MUTAGENESIS OF HIS-27; HIS-29; HIS-33; HIS-37; HIS-39; HIS-106; MET-110; MET-113; MET-116; HIS-118 AND CYS-148</scope>
    <source>
        <strain>S1</strain>
    </source>
</reference>
<gene>
    <name evidence="4" type="primary">copI</name>
</gene>